<accession>Q54RF0</accession>
<comment type="similarity">
    <text evidence="1">Belongs to the isochorismatase family.</text>
</comment>
<comment type="sequence caution" evidence="1">
    <conflict type="erroneous gene model prediction">
        <sequence resource="EMBL-CDS" id="EAL65823"/>
    </conflict>
</comment>
<gene>
    <name type="ORF">DDB_G0283169</name>
</gene>
<keyword id="KW-1185">Reference proteome</keyword>
<protein>
    <recommendedName>
        <fullName>Isochorismatase family protein 2A</fullName>
    </recommendedName>
</protein>
<organism>
    <name type="scientific">Dictyostelium discoideum</name>
    <name type="common">Social amoeba</name>
    <dbReference type="NCBI Taxonomy" id="44689"/>
    <lineage>
        <taxon>Eukaryota</taxon>
        <taxon>Amoebozoa</taxon>
        <taxon>Evosea</taxon>
        <taxon>Eumycetozoa</taxon>
        <taxon>Dictyostelia</taxon>
        <taxon>Dictyosteliales</taxon>
        <taxon>Dictyosteliaceae</taxon>
        <taxon>Dictyostelium</taxon>
    </lineage>
</organism>
<reference key="1">
    <citation type="journal article" date="2005" name="Nature">
        <title>The genome of the social amoeba Dictyostelium discoideum.</title>
        <authorList>
            <person name="Eichinger L."/>
            <person name="Pachebat J.A."/>
            <person name="Gloeckner G."/>
            <person name="Rajandream M.A."/>
            <person name="Sucgang R."/>
            <person name="Berriman M."/>
            <person name="Song J."/>
            <person name="Olsen R."/>
            <person name="Szafranski K."/>
            <person name="Xu Q."/>
            <person name="Tunggal B."/>
            <person name="Kummerfeld S."/>
            <person name="Madera M."/>
            <person name="Konfortov B.A."/>
            <person name="Rivero F."/>
            <person name="Bankier A.T."/>
            <person name="Lehmann R."/>
            <person name="Hamlin N."/>
            <person name="Davies R."/>
            <person name="Gaudet P."/>
            <person name="Fey P."/>
            <person name="Pilcher K."/>
            <person name="Chen G."/>
            <person name="Saunders D."/>
            <person name="Sodergren E.J."/>
            <person name="Davis P."/>
            <person name="Kerhornou A."/>
            <person name="Nie X."/>
            <person name="Hall N."/>
            <person name="Anjard C."/>
            <person name="Hemphill L."/>
            <person name="Bason N."/>
            <person name="Farbrother P."/>
            <person name="Desany B."/>
            <person name="Just E."/>
            <person name="Morio T."/>
            <person name="Rost R."/>
            <person name="Churcher C.M."/>
            <person name="Cooper J."/>
            <person name="Haydock S."/>
            <person name="van Driessche N."/>
            <person name="Cronin A."/>
            <person name="Goodhead I."/>
            <person name="Muzny D.M."/>
            <person name="Mourier T."/>
            <person name="Pain A."/>
            <person name="Lu M."/>
            <person name="Harper D."/>
            <person name="Lindsay R."/>
            <person name="Hauser H."/>
            <person name="James K.D."/>
            <person name="Quiles M."/>
            <person name="Madan Babu M."/>
            <person name="Saito T."/>
            <person name="Buchrieser C."/>
            <person name="Wardroper A."/>
            <person name="Felder M."/>
            <person name="Thangavelu M."/>
            <person name="Johnson D."/>
            <person name="Knights A."/>
            <person name="Loulseged H."/>
            <person name="Mungall K.L."/>
            <person name="Oliver K."/>
            <person name="Price C."/>
            <person name="Quail M.A."/>
            <person name="Urushihara H."/>
            <person name="Hernandez J."/>
            <person name="Rabbinowitsch E."/>
            <person name="Steffen D."/>
            <person name="Sanders M."/>
            <person name="Ma J."/>
            <person name="Kohara Y."/>
            <person name="Sharp S."/>
            <person name="Simmonds M.N."/>
            <person name="Spiegler S."/>
            <person name="Tivey A."/>
            <person name="Sugano S."/>
            <person name="White B."/>
            <person name="Walker D."/>
            <person name="Woodward J.R."/>
            <person name="Winckler T."/>
            <person name="Tanaka Y."/>
            <person name="Shaulsky G."/>
            <person name="Schleicher M."/>
            <person name="Weinstock G.M."/>
            <person name="Rosenthal A."/>
            <person name="Cox E.C."/>
            <person name="Chisholm R.L."/>
            <person name="Gibbs R.A."/>
            <person name="Loomis W.F."/>
            <person name="Platzer M."/>
            <person name="Kay R.R."/>
            <person name="Williams J.G."/>
            <person name="Dear P.H."/>
            <person name="Noegel A.A."/>
            <person name="Barrell B.G."/>
            <person name="Kuspa A."/>
        </authorList>
    </citation>
    <scope>NUCLEOTIDE SEQUENCE [LARGE SCALE GENOMIC DNA]</scope>
    <source>
        <strain>AX4</strain>
    </source>
</reference>
<proteinExistence type="inferred from homology"/>
<feature type="chain" id="PRO_0000331277" description="Isochorismatase family protein 2A">
    <location>
        <begin position="1"/>
        <end position="200"/>
    </location>
</feature>
<dbReference type="EMBL" id="AAFI02000051">
    <property type="protein sequence ID" value="EAL65823.1"/>
    <property type="status" value="ALT_SEQ"/>
    <property type="molecule type" value="Genomic_DNA"/>
</dbReference>
<dbReference type="RefSeq" id="XP_639195.1">
    <property type="nucleotide sequence ID" value="XM_634103.1"/>
</dbReference>
<dbReference type="SMR" id="Q54RF0"/>
<dbReference type="STRING" id="44689.Q54RF0"/>
<dbReference type="PaxDb" id="44689-DDB0185392"/>
<dbReference type="EnsemblProtists" id="EAL65823">
    <property type="protein sequence ID" value="EAL65823"/>
    <property type="gene ID" value="DDB_G0283169"/>
</dbReference>
<dbReference type="GeneID" id="8623970"/>
<dbReference type="KEGG" id="ddi:DDB_G0283169"/>
<dbReference type="dictyBase" id="DDB_G0283169"/>
<dbReference type="VEuPathDB" id="AmoebaDB:DDB_G0283169"/>
<dbReference type="eggNOG" id="KOG4044">
    <property type="taxonomic scope" value="Eukaryota"/>
</dbReference>
<dbReference type="InParanoid" id="Q54RF0"/>
<dbReference type="PRO" id="PR:Q54RF0"/>
<dbReference type="Proteomes" id="UP000002195">
    <property type="component" value="Chromosome 4"/>
</dbReference>
<dbReference type="Gene3D" id="3.40.50.850">
    <property type="entry name" value="Isochorismatase-like"/>
    <property type="match status" value="1"/>
</dbReference>
<dbReference type="InterPro" id="IPR000868">
    <property type="entry name" value="Isochorismatase-like_dom"/>
</dbReference>
<dbReference type="InterPro" id="IPR036380">
    <property type="entry name" value="Isochorismatase-like_sf"/>
</dbReference>
<dbReference type="InterPro" id="IPR050993">
    <property type="entry name" value="Isochorismatase_domain"/>
</dbReference>
<dbReference type="PANTHER" id="PTHR14119">
    <property type="entry name" value="HYDROLASE"/>
    <property type="match status" value="1"/>
</dbReference>
<dbReference type="PANTHER" id="PTHR14119:SF12">
    <property type="entry name" value="ISOCHORISMATASE FAMILY PROTEIN 2A-RELATED"/>
    <property type="match status" value="1"/>
</dbReference>
<dbReference type="Pfam" id="PF00857">
    <property type="entry name" value="Isochorismatase"/>
    <property type="match status" value="1"/>
</dbReference>
<dbReference type="SUPFAM" id="SSF52499">
    <property type="entry name" value="Isochorismatase-like hydrolases"/>
    <property type="match status" value="1"/>
</dbReference>
<evidence type="ECO:0000305" key="1"/>
<sequence length="200" mass="22763">MIGRISSKTTALFICDIQTSFLKTVTQIEELIINNKSLMDSCLEFKIPIIMTQHDKNLFGEIVEPLRYSSSSSSSLSNVMVFDKIAYSMYTKELAQYVKENLPNLKSVILTGLESHVCVLQTALDLLENGYEVHVIDDATTSVQPKEYKSSLKRMKQSGVFLTSTETVIYQILQSDNHPKFKKIDELIVKRLFQINNINK</sequence>
<name>ISC2A_DICDI</name>